<feature type="chain" id="PRO_0000072446" description="Transposable element Tcb1 transposase">
    <location>
        <begin position="1"/>
        <end position="273"/>
    </location>
</feature>
<comment type="function">
    <text>Probably essential for transposable element Tcb1 transposition. The insertion of Tcb1 is the main cause of spontaneous mutations.</text>
</comment>
<comment type="subcellular location">
    <subcellularLocation>
        <location>Nucleus</location>
    </subcellularLocation>
</comment>
<comment type="similarity">
    <text evidence="1">Belongs to the transposase 5 family.</text>
</comment>
<accession>P35072</accession>
<evidence type="ECO:0000305" key="1"/>
<keyword id="KW-0229">DNA integration</keyword>
<keyword id="KW-0233">DNA recombination</keyword>
<keyword id="KW-0238">DNA-binding</keyword>
<keyword id="KW-0539">Nucleus</keyword>
<keyword id="KW-0814">Transposable element</keyword>
<name>TCB1_CAEBR</name>
<dbReference type="EMBL" id="X07827">
    <property type="protein sequence ID" value="CAA30681.1"/>
    <property type="molecule type" value="Genomic_DNA"/>
</dbReference>
<dbReference type="EMBL" id="X54218">
    <property type="protein sequence ID" value="CAA38131.1"/>
    <property type="molecule type" value="Genomic_DNA"/>
</dbReference>
<dbReference type="PIR" id="S01245">
    <property type="entry name" value="S01245"/>
</dbReference>
<dbReference type="PIR" id="S15609">
    <property type="entry name" value="S15609"/>
</dbReference>
<dbReference type="SMR" id="P35072"/>
<dbReference type="eggNOG" id="KOG0156">
    <property type="taxonomic scope" value="Eukaryota"/>
</dbReference>
<dbReference type="HOGENOM" id="CLU_351337_0_0_1"/>
<dbReference type="GO" id="GO:0005634">
    <property type="term" value="C:nucleus"/>
    <property type="evidence" value="ECO:0007669"/>
    <property type="project" value="UniProtKB-SubCell"/>
</dbReference>
<dbReference type="GO" id="GO:0003677">
    <property type="term" value="F:DNA binding"/>
    <property type="evidence" value="ECO:0007669"/>
    <property type="project" value="UniProtKB-KW"/>
</dbReference>
<dbReference type="GO" id="GO:0015074">
    <property type="term" value="P:DNA integration"/>
    <property type="evidence" value="ECO:0007669"/>
    <property type="project" value="UniProtKB-KW"/>
</dbReference>
<dbReference type="GO" id="GO:0006313">
    <property type="term" value="P:DNA transposition"/>
    <property type="evidence" value="ECO:0007669"/>
    <property type="project" value="InterPro"/>
</dbReference>
<dbReference type="FunFam" id="3.30.420.10:FF:000293">
    <property type="entry name" value="Protein CBG00653"/>
    <property type="match status" value="1"/>
</dbReference>
<dbReference type="Gene3D" id="3.30.420.10">
    <property type="entry name" value="Ribonuclease H-like superfamily/Ribonuclease H"/>
    <property type="match status" value="1"/>
</dbReference>
<dbReference type="InterPro" id="IPR036397">
    <property type="entry name" value="RNaseH_sf"/>
</dbReference>
<dbReference type="InterPro" id="IPR038717">
    <property type="entry name" value="Tc1-like_DDE_dom"/>
</dbReference>
<dbReference type="InterPro" id="IPR052338">
    <property type="entry name" value="Transposase_5"/>
</dbReference>
<dbReference type="InterPro" id="IPR002492">
    <property type="entry name" value="Transposase_Tc1-like"/>
</dbReference>
<dbReference type="PANTHER" id="PTHR23022:SF134">
    <property type="entry name" value="TRANSPOSABLE ELEMENT TC1 TRANSPOSASE"/>
    <property type="match status" value="1"/>
</dbReference>
<dbReference type="PANTHER" id="PTHR23022">
    <property type="entry name" value="TRANSPOSABLE ELEMENT-RELATED"/>
    <property type="match status" value="1"/>
</dbReference>
<dbReference type="Pfam" id="PF13358">
    <property type="entry name" value="DDE_3"/>
    <property type="match status" value="1"/>
</dbReference>
<dbReference type="Pfam" id="PF01498">
    <property type="entry name" value="HTH_Tnp_Tc3_2"/>
    <property type="match status" value="1"/>
</dbReference>
<organism>
    <name type="scientific">Caenorhabditis briggsae</name>
    <dbReference type="NCBI Taxonomy" id="6238"/>
    <lineage>
        <taxon>Eukaryota</taxon>
        <taxon>Metazoa</taxon>
        <taxon>Ecdysozoa</taxon>
        <taxon>Nematoda</taxon>
        <taxon>Chromadorea</taxon>
        <taxon>Rhabditida</taxon>
        <taxon>Rhabditina</taxon>
        <taxon>Rhabditomorpha</taxon>
        <taxon>Rhabditoidea</taxon>
        <taxon>Rhabditidae</taxon>
        <taxon>Peloderinae</taxon>
        <taxon>Caenorhabditis</taxon>
    </lineage>
</organism>
<sequence length="273" mass="31842">MDRNILRACREDPRRTSTDIQLSVTSPNEPVPSRRTIRRRLQVAGLHGRRPVKKPLVSLKNRKARVEWAKQHLSWGPREWANHIWSDESKFNMFGTDGIQWIRRPIGSRYAPQYQCPTVKHGGGSVMVWGCFSDTSMGPLKRIVGTMDRYVYEDILENTMRPWARANLGRSWVFQQDNDPKHTSGHVANWFRRRRVNLLEWPSQSPDLNPIEHMWEELERRLKGVRASNANQKFAQLEAAWKSIPMTVVQTLLESMPRRCKAVIDAKGYPTKY</sequence>
<protein>
    <recommendedName>
        <fullName>Transposable element Tcb1 transposase</fullName>
    </recommendedName>
    <alternativeName>
        <fullName>Transposable element Barney transposase</fullName>
    </alternativeName>
</protein>
<proteinExistence type="inferred from homology"/>
<reference key="1">
    <citation type="journal article" date="1990" name="J. Mol. Evol.">
        <title>Isolation and sequence analysis of Caenorhabditis briggsae repetitive elements related to the Caenorhabditis elegans transposon Tc1.</title>
        <authorList>
            <person name="Harris L.J."/>
            <person name="Prasad S."/>
            <person name="Rose A.M."/>
        </authorList>
    </citation>
    <scope>NUCLEOTIDE SEQUENCE [GENOMIC DNA]</scope>
    <source>
        <strain>G16</strain>
    </source>
</reference>
<reference key="2">
    <citation type="journal article" date="1988" name="Nucleic Acids Res.">
        <title>Sequence identity between an inverted repeat family of transposable elements in Drosophila and Caenorhabditis.</title>
        <authorList>
            <person name="Harris L.J."/>
            <person name="Baillie D.L."/>
            <person name="Rose A.M."/>
        </authorList>
    </citation>
    <scope>NUCLEOTIDE SEQUENCE [GENOMIC DNA]</scope>
    <source>
        <strain>G16</strain>
    </source>
</reference>